<gene>
    <name type="primary">CLDN6</name>
    <name type="ORF">UNQ757/PRO1488</name>
</gene>
<organism>
    <name type="scientific">Homo sapiens</name>
    <name type="common">Human</name>
    <dbReference type="NCBI Taxonomy" id="9606"/>
    <lineage>
        <taxon>Eukaryota</taxon>
        <taxon>Metazoa</taxon>
        <taxon>Chordata</taxon>
        <taxon>Craniata</taxon>
        <taxon>Vertebrata</taxon>
        <taxon>Euteleostomi</taxon>
        <taxon>Mammalia</taxon>
        <taxon>Eutheria</taxon>
        <taxon>Euarchontoglires</taxon>
        <taxon>Primates</taxon>
        <taxon>Haplorrhini</taxon>
        <taxon>Catarrhini</taxon>
        <taxon>Hominidae</taxon>
        <taxon>Homo</taxon>
    </lineage>
</organism>
<reference key="1">
    <citation type="submission" date="1999-09" db="EMBL/GenBank/DDBJ databases">
        <authorList>
            <person name="Keen T.J."/>
            <person name="Inglehearn C.F."/>
        </authorList>
    </citation>
    <scope>NUCLEOTIDE SEQUENCE [GENOMIC DNA]</scope>
    <scope>VARIANT VAL-143</scope>
</reference>
<reference key="2">
    <citation type="submission" date="2001-02" db="EMBL/GenBank/DDBJ databases">
        <title>Skullin: a novel membrane molecule marks formation of epithelium.</title>
        <authorList>
            <person name="Troy T."/>
            <person name="Wisco V."/>
            <person name="Turksen K."/>
        </authorList>
    </citation>
    <scope>NUCLEOTIDE SEQUENCE [MRNA]</scope>
    <scope>VARIANT VAL-143</scope>
</reference>
<reference key="3">
    <citation type="journal article" date="2003" name="Genome Res.">
        <title>The secreted protein discovery initiative (SPDI), a large-scale effort to identify novel human secreted and transmembrane proteins: a bioinformatics assessment.</title>
        <authorList>
            <person name="Clark H.F."/>
            <person name="Gurney A.L."/>
            <person name="Abaya E."/>
            <person name="Baker K."/>
            <person name="Baldwin D.T."/>
            <person name="Brush J."/>
            <person name="Chen J."/>
            <person name="Chow B."/>
            <person name="Chui C."/>
            <person name="Crowley C."/>
            <person name="Currell B."/>
            <person name="Deuel B."/>
            <person name="Dowd P."/>
            <person name="Eaton D."/>
            <person name="Foster J.S."/>
            <person name="Grimaldi C."/>
            <person name="Gu Q."/>
            <person name="Hass P.E."/>
            <person name="Heldens S."/>
            <person name="Huang A."/>
            <person name="Kim H.S."/>
            <person name="Klimowski L."/>
            <person name="Jin Y."/>
            <person name="Johnson S."/>
            <person name="Lee J."/>
            <person name="Lewis L."/>
            <person name="Liao D."/>
            <person name="Mark M.R."/>
            <person name="Robbie E."/>
            <person name="Sanchez C."/>
            <person name="Schoenfeld J."/>
            <person name="Seshagiri S."/>
            <person name="Simmons L."/>
            <person name="Singh J."/>
            <person name="Smith V."/>
            <person name="Stinson J."/>
            <person name="Vagts A."/>
            <person name="Vandlen R.L."/>
            <person name="Watanabe C."/>
            <person name="Wieand D."/>
            <person name="Woods K."/>
            <person name="Xie M.-H."/>
            <person name="Yansura D.G."/>
            <person name="Yi S."/>
            <person name="Yu G."/>
            <person name="Yuan J."/>
            <person name="Zhang M."/>
            <person name="Zhang Z."/>
            <person name="Goddard A.D."/>
            <person name="Wood W.I."/>
            <person name="Godowski P.J."/>
            <person name="Gray A.M."/>
        </authorList>
    </citation>
    <scope>NUCLEOTIDE SEQUENCE [LARGE SCALE MRNA]</scope>
</reference>
<reference key="4">
    <citation type="submission" date="2004-10" db="EMBL/GenBank/DDBJ databases">
        <title>Cloning of human full-length CDSs in BD Creator(TM) system donor vector.</title>
        <authorList>
            <person name="Kalnine N."/>
            <person name="Chen X."/>
            <person name="Rolfs A."/>
            <person name="Halleck A."/>
            <person name="Hines L."/>
            <person name="Eisenstein S."/>
            <person name="Koundinya M."/>
            <person name="Raphael J."/>
            <person name="Moreira D."/>
            <person name="Kelley T."/>
            <person name="LaBaer J."/>
            <person name="Lin Y."/>
            <person name="Phelan M."/>
            <person name="Farmer A."/>
        </authorList>
    </citation>
    <scope>NUCLEOTIDE SEQUENCE [LARGE SCALE MRNA]</scope>
</reference>
<reference key="5">
    <citation type="journal article" date="2005" name="DNA Res.">
        <title>Signal sequence and keyword trap in silico for selection of full-length human cDNAs encoding secretion or membrane proteins from oligo-capped cDNA libraries.</title>
        <authorList>
            <person name="Otsuki T."/>
            <person name="Ota T."/>
            <person name="Nishikawa T."/>
            <person name="Hayashi K."/>
            <person name="Suzuki Y."/>
            <person name="Yamamoto J."/>
            <person name="Wakamatsu A."/>
            <person name="Kimura K."/>
            <person name="Sakamoto K."/>
            <person name="Hatano N."/>
            <person name="Kawai Y."/>
            <person name="Ishii S."/>
            <person name="Saito K."/>
            <person name="Kojima S."/>
            <person name="Sugiyama T."/>
            <person name="Ono T."/>
            <person name="Okano K."/>
            <person name="Yoshikawa Y."/>
            <person name="Aotsuka S."/>
            <person name="Sasaki N."/>
            <person name="Hattori A."/>
            <person name="Okumura K."/>
            <person name="Nagai K."/>
            <person name="Sugano S."/>
            <person name="Isogai T."/>
        </authorList>
    </citation>
    <scope>NUCLEOTIDE SEQUENCE [LARGE SCALE MRNA]</scope>
    <scope>VARIANT VAL-143</scope>
</reference>
<reference key="6">
    <citation type="submission" date="2005-09" db="EMBL/GenBank/DDBJ databases">
        <authorList>
            <person name="Mural R.J."/>
            <person name="Istrail S."/>
            <person name="Sutton G.G."/>
            <person name="Florea L."/>
            <person name="Halpern A.L."/>
            <person name="Mobarry C.M."/>
            <person name="Lippert R."/>
            <person name="Walenz B."/>
            <person name="Shatkay H."/>
            <person name="Dew I."/>
            <person name="Miller J.R."/>
            <person name="Flanigan M.J."/>
            <person name="Edwards N.J."/>
            <person name="Bolanos R."/>
            <person name="Fasulo D."/>
            <person name="Halldorsson B.V."/>
            <person name="Hannenhalli S."/>
            <person name="Turner R."/>
            <person name="Yooseph S."/>
            <person name="Lu F."/>
            <person name="Nusskern D.R."/>
            <person name="Shue B.C."/>
            <person name="Zheng X.H."/>
            <person name="Zhong F."/>
            <person name="Delcher A.L."/>
            <person name="Huson D.H."/>
            <person name="Kravitz S.A."/>
            <person name="Mouchard L."/>
            <person name="Reinert K."/>
            <person name="Remington K.A."/>
            <person name="Clark A.G."/>
            <person name="Waterman M.S."/>
            <person name="Eichler E.E."/>
            <person name="Adams M.D."/>
            <person name="Hunkapiller M.W."/>
            <person name="Myers E.W."/>
            <person name="Venter J.C."/>
        </authorList>
    </citation>
    <scope>NUCLEOTIDE SEQUENCE [LARGE SCALE GENOMIC DNA]</scope>
</reference>
<reference key="7">
    <citation type="journal article" date="2004" name="Genome Res.">
        <title>The status, quality, and expansion of the NIH full-length cDNA project: the Mammalian Gene Collection (MGC).</title>
        <authorList>
            <consortium name="The MGC Project Team"/>
        </authorList>
    </citation>
    <scope>NUCLEOTIDE SEQUENCE [LARGE SCALE MRNA]</scope>
    <scope>VARIANT VAL-143</scope>
    <source>
        <tissue>Placenta</tissue>
    </source>
</reference>
<reference key="8">
    <citation type="journal article" date="2007" name="J. Virol.">
        <title>Claudin-6 and claudin-9 function as additional coreceptors for hepatitis C virus.</title>
        <authorList>
            <person name="Zheng A."/>
            <person name="Yuan F."/>
            <person name="Li Y."/>
            <person name="Zhu F."/>
            <person name="Hou P."/>
            <person name="Li J."/>
            <person name="Song X."/>
            <person name="Ding M."/>
            <person name="Deng H."/>
        </authorList>
    </citation>
    <scope>TISSUE SPECIFICITY</scope>
    <scope>FUNCTION (MICROBIAL INFECTION)</scope>
</reference>
<reference key="9">
    <citation type="journal article" date="2010" name="J. Biol. Chem.">
        <title>Claudin association with CD81 defines hepatitis C virus entry.</title>
        <authorList>
            <person name="Harris H.J."/>
            <person name="Davis C."/>
            <person name="Mullins J.G."/>
            <person name="Hu K."/>
            <person name="Goodall M."/>
            <person name="Farquhar M.J."/>
            <person name="Mee C.J."/>
            <person name="McCaffrey K."/>
            <person name="Young S."/>
            <person name="Drummer H."/>
            <person name="Balfe P."/>
            <person name="McKeating J.A."/>
        </authorList>
    </citation>
    <scope>FUNCTION (MICROBIAL INFECTION)</scope>
    <scope>SUBCELLULAR LOCATION</scope>
    <scope>INTERACTION WITH CLDN1; CD81 AND OCLN</scope>
</reference>
<reference key="10">
    <citation type="journal article" date="2011" name="BMC Syst. Biol.">
        <title>Initial characterization of the human central proteome.</title>
        <authorList>
            <person name="Burkard T.R."/>
            <person name="Planyavsky M."/>
            <person name="Kaupe I."/>
            <person name="Breitwieser F.P."/>
            <person name="Buerckstuemmer T."/>
            <person name="Bennett K.L."/>
            <person name="Superti-Furga G."/>
            <person name="Colinge J."/>
        </authorList>
    </citation>
    <scope>IDENTIFICATION BY MASS SPECTROMETRY [LARGE SCALE ANALYSIS]</scope>
</reference>
<reference key="11">
    <citation type="journal article" date="2011" name="Sci. Signal.">
        <title>System-wide temporal characterization of the proteome and phosphoproteome of human embryonic stem cell differentiation.</title>
        <authorList>
            <person name="Rigbolt K.T."/>
            <person name="Prokhorova T.A."/>
            <person name="Akimov V."/>
            <person name="Henningsen J."/>
            <person name="Johansen P.T."/>
            <person name="Kratchmarova I."/>
            <person name="Kassem M."/>
            <person name="Mann M."/>
            <person name="Olsen J.V."/>
            <person name="Blagoev B."/>
        </authorList>
    </citation>
    <scope>PHOSPHORYLATION [LARGE SCALE ANALYSIS] AT SER-201; SER-203; SER-208 AND SER-212</scope>
    <scope>IDENTIFICATION BY MASS SPECTROMETRY [LARGE SCALE ANALYSIS]</scope>
</reference>
<dbReference type="EMBL" id="AJ249735">
    <property type="protein sequence ID" value="CAB56533.1"/>
    <property type="molecule type" value="Genomic_DNA"/>
</dbReference>
<dbReference type="EMBL" id="AF125306">
    <property type="protein sequence ID" value="AAK02013.1"/>
    <property type="molecule type" value="mRNA"/>
</dbReference>
<dbReference type="EMBL" id="AY358480">
    <property type="protein sequence ID" value="AAQ88844.1"/>
    <property type="molecule type" value="mRNA"/>
</dbReference>
<dbReference type="EMBL" id="BT007399">
    <property type="protein sequence ID" value="AAP36063.1"/>
    <property type="molecule type" value="mRNA"/>
</dbReference>
<dbReference type="EMBL" id="AK075329">
    <property type="protein sequence ID" value="BAG52111.1"/>
    <property type="molecule type" value="mRNA"/>
</dbReference>
<dbReference type="EMBL" id="CH471112">
    <property type="protein sequence ID" value="EAW85431.1"/>
    <property type="molecule type" value="Genomic_DNA"/>
</dbReference>
<dbReference type="EMBL" id="CH471112">
    <property type="protein sequence ID" value="EAW85432.1"/>
    <property type="molecule type" value="Genomic_DNA"/>
</dbReference>
<dbReference type="EMBL" id="BC008934">
    <property type="protein sequence ID" value="AAH08934.1"/>
    <property type="molecule type" value="mRNA"/>
</dbReference>
<dbReference type="CCDS" id="CCDS10488.1"/>
<dbReference type="RefSeq" id="NP_067018.2">
    <property type="nucleotide sequence ID" value="NM_021195.5"/>
</dbReference>
<dbReference type="SMR" id="P56747"/>
<dbReference type="BioGRID" id="114531">
    <property type="interactions" value="6"/>
</dbReference>
<dbReference type="FunCoup" id="P56747">
    <property type="interactions" value="362"/>
</dbReference>
<dbReference type="IntAct" id="P56747">
    <property type="interactions" value="7"/>
</dbReference>
<dbReference type="MINT" id="P56747"/>
<dbReference type="STRING" id="9606.ENSP00000380131"/>
<dbReference type="GlyGen" id="P56747">
    <property type="glycosylation" value="4 sites, 1 O-linked glycan (4 sites)"/>
</dbReference>
<dbReference type="iPTMnet" id="P56747"/>
<dbReference type="PhosphoSitePlus" id="P56747"/>
<dbReference type="SwissPalm" id="P56747"/>
<dbReference type="BioMuta" id="CLDN6"/>
<dbReference type="DMDM" id="90183180"/>
<dbReference type="jPOST" id="P56747"/>
<dbReference type="MassIVE" id="P56747"/>
<dbReference type="PaxDb" id="9606-ENSP00000380131"/>
<dbReference type="PeptideAtlas" id="P56747"/>
<dbReference type="ProteomicsDB" id="56943"/>
<dbReference type="Pumba" id="P56747"/>
<dbReference type="ABCD" id="P56747">
    <property type="antibodies" value="8 sequenced antibodies"/>
</dbReference>
<dbReference type="Antibodypedia" id="23973">
    <property type="antibodies" value="599 antibodies from 31 providers"/>
</dbReference>
<dbReference type="DNASU" id="9074"/>
<dbReference type="Ensembl" id="ENST00000328796.5">
    <property type="protein sequence ID" value="ENSP00000328674.4"/>
    <property type="gene ID" value="ENSG00000184697.7"/>
</dbReference>
<dbReference type="Ensembl" id="ENST00000396925.1">
    <property type="protein sequence ID" value="ENSP00000380131.1"/>
    <property type="gene ID" value="ENSG00000184697.7"/>
</dbReference>
<dbReference type="GeneID" id="9074"/>
<dbReference type="KEGG" id="hsa:9074"/>
<dbReference type="MANE-Select" id="ENST00000328796.5">
    <property type="protein sequence ID" value="ENSP00000328674.4"/>
    <property type="RefSeq nucleotide sequence ID" value="NM_021195.5"/>
    <property type="RefSeq protein sequence ID" value="NP_067018.2"/>
</dbReference>
<dbReference type="UCSC" id="uc002csu.5">
    <property type="organism name" value="human"/>
</dbReference>
<dbReference type="AGR" id="HGNC:2048"/>
<dbReference type="CTD" id="9074"/>
<dbReference type="DisGeNET" id="9074"/>
<dbReference type="GeneCards" id="CLDN6"/>
<dbReference type="HGNC" id="HGNC:2048">
    <property type="gene designation" value="CLDN6"/>
</dbReference>
<dbReference type="HPA" id="ENSG00000184697">
    <property type="expression patterns" value="Tissue enhanced (brain)"/>
</dbReference>
<dbReference type="MIM" id="615798">
    <property type="type" value="gene"/>
</dbReference>
<dbReference type="neXtProt" id="NX_P56747"/>
<dbReference type="OpenTargets" id="ENSG00000184697"/>
<dbReference type="PharmGKB" id="PA26574"/>
<dbReference type="VEuPathDB" id="HostDB:ENSG00000184697"/>
<dbReference type="eggNOG" id="ENOG502QSCN">
    <property type="taxonomic scope" value="Eukaryota"/>
</dbReference>
<dbReference type="GeneTree" id="ENSGT00940000163060"/>
<dbReference type="HOGENOM" id="CLU_076370_1_2_1"/>
<dbReference type="InParanoid" id="P56747"/>
<dbReference type="OMA" id="NHYMARY"/>
<dbReference type="OrthoDB" id="8830244at2759"/>
<dbReference type="PAN-GO" id="P56747">
    <property type="GO annotations" value="4 GO annotations based on evolutionary models"/>
</dbReference>
<dbReference type="PhylomeDB" id="P56747"/>
<dbReference type="TreeFam" id="TF331936"/>
<dbReference type="PathwayCommons" id="P56747"/>
<dbReference type="Reactome" id="R-HSA-420029">
    <property type="pathway name" value="Tight junction interactions"/>
</dbReference>
<dbReference type="SignaLink" id="P56747"/>
<dbReference type="BioGRID-ORCS" id="9074">
    <property type="hits" value="29 hits in 1107 CRISPR screens"/>
</dbReference>
<dbReference type="GeneWiki" id="CLDN6"/>
<dbReference type="GenomeRNAi" id="9074"/>
<dbReference type="Pharos" id="P56747">
    <property type="development level" value="Tbio"/>
</dbReference>
<dbReference type="PRO" id="PR:P56747"/>
<dbReference type="Proteomes" id="UP000005640">
    <property type="component" value="Chromosome 16"/>
</dbReference>
<dbReference type="RNAct" id="P56747">
    <property type="molecule type" value="protein"/>
</dbReference>
<dbReference type="Bgee" id="ENSG00000184697">
    <property type="expression patterns" value="Expressed in primordial germ cell in gonad and 106 other cell types or tissues"/>
</dbReference>
<dbReference type="ExpressionAtlas" id="P56747">
    <property type="expression patterns" value="baseline and differential"/>
</dbReference>
<dbReference type="GO" id="GO:0016327">
    <property type="term" value="C:apicolateral plasma membrane"/>
    <property type="evidence" value="ECO:0007669"/>
    <property type="project" value="Ensembl"/>
</dbReference>
<dbReference type="GO" id="GO:0005923">
    <property type="term" value="C:bicellular tight junction"/>
    <property type="evidence" value="ECO:0000250"/>
    <property type="project" value="UniProtKB"/>
</dbReference>
<dbReference type="GO" id="GO:0005886">
    <property type="term" value="C:plasma membrane"/>
    <property type="evidence" value="ECO:0000314"/>
    <property type="project" value="UniProtKB"/>
</dbReference>
<dbReference type="GO" id="GO:0042802">
    <property type="term" value="F:identical protein binding"/>
    <property type="evidence" value="ECO:0000250"/>
    <property type="project" value="UniProtKB"/>
</dbReference>
<dbReference type="GO" id="GO:0005198">
    <property type="term" value="F:structural molecule activity"/>
    <property type="evidence" value="ECO:0007669"/>
    <property type="project" value="InterPro"/>
</dbReference>
<dbReference type="GO" id="GO:0001618">
    <property type="term" value="F:virus receptor activity"/>
    <property type="evidence" value="ECO:0000315"/>
    <property type="project" value="UniProtKB"/>
</dbReference>
<dbReference type="GO" id="GO:0070830">
    <property type="term" value="P:bicellular tight junction assembly"/>
    <property type="evidence" value="ECO:0000318"/>
    <property type="project" value="GO_Central"/>
</dbReference>
<dbReference type="GO" id="GO:0016338">
    <property type="term" value="P:calcium-independent cell-cell adhesion via plasma membrane cell-adhesion molecules"/>
    <property type="evidence" value="ECO:0000250"/>
    <property type="project" value="UniProtKB"/>
</dbReference>
<dbReference type="GO" id="GO:0007155">
    <property type="term" value="P:cell adhesion"/>
    <property type="evidence" value="ECO:0000318"/>
    <property type="project" value="GO_Central"/>
</dbReference>
<dbReference type="FunFam" id="1.20.140.150:FF:000001">
    <property type="entry name" value="Claudin"/>
    <property type="match status" value="1"/>
</dbReference>
<dbReference type="Gene3D" id="1.20.140.150">
    <property type="match status" value="1"/>
</dbReference>
<dbReference type="InterPro" id="IPR006187">
    <property type="entry name" value="Claudin"/>
</dbReference>
<dbReference type="InterPro" id="IPR003925">
    <property type="entry name" value="Claudin6"/>
</dbReference>
<dbReference type="InterPro" id="IPR017974">
    <property type="entry name" value="Claudin_CS"/>
</dbReference>
<dbReference type="InterPro" id="IPR004031">
    <property type="entry name" value="PMP22/EMP/MP20/Claudin"/>
</dbReference>
<dbReference type="PANTHER" id="PTHR12002">
    <property type="entry name" value="CLAUDIN"/>
    <property type="match status" value="1"/>
</dbReference>
<dbReference type="Pfam" id="PF00822">
    <property type="entry name" value="PMP22_Claudin"/>
    <property type="match status" value="1"/>
</dbReference>
<dbReference type="PRINTS" id="PR01077">
    <property type="entry name" value="CLAUDIN"/>
</dbReference>
<dbReference type="PRINTS" id="PR01445">
    <property type="entry name" value="CLAUDIN6"/>
</dbReference>
<dbReference type="PROSITE" id="PS01346">
    <property type="entry name" value="CLAUDIN"/>
    <property type="match status" value="1"/>
</dbReference>
<proteinExistence type="evidence at protein level"/>
<protein>
    <recommendedName>
        <fullName>Claudin-6</fullName>
    </recommendedName>
    <alternativeName>
        <fullName>Skullin</fullName>
    </alternativeName>
</protein>
<accession>P56747</accession>
<accession>B3KQP9</accession>
<accession>D3DUA5</accession>
<sequence length="220" mass="23292">MASAGMQILGVVLTLLGWVNGLVSCALPMWKVTAFIGNSIVVAQVVWEGLWMSCVVQSTGQMQCKVYDSLLALPQDLQAARALCVIALLVALFGLLVYLAGAKCTTCVEEKDSKARLVLTSGIVFVISGVLTLIPVCWTAHAIIRDFYNPLVAEAQKRELGASLYLGWAASGLLLLGGGLLCCTCPSGGSQGPSHYMARYSTSAPAISRGPSEYPTKNYV</sequence>
<keyword id="KW-0965">Cell junction</keyword>
<keyword id="KW-1003">Cell membrane</keyword>
<keyword id="KW-1183">Host cell receptor for virus entry</keyword>
<keyword id="KW-0945">Host-virus interaction</keyword>
<keyword id="KW-0472">Membrane</keyword>
<keyword id="KW-0597">Phosphoprotein</keyword>
<keyword id="KW-1267">Proteomics identification</keyword>
<keyword id="KW-0675">Receptor</keyword>
<keyword id="KW-1185">Reference proteome</keyword>
<keyword id="KW-0796">Tight junction</keyword>
<keyword id="KW-0812">Transmembrane</keyword>
<keyword id="KW-1133">Transmembrane helix</keyword>
<name>CLD6_HUMAN</name>
<comment type="function">
    <text evidence="1">Plays a major role in tight junction-specific obliteration of the intercellular space.</text>
</comment>
<comment type="function">
    <text evidence="6 7">(Microbial infection) Acts as a receptor for hepatitis C virus (HCV) entry into hepatic cells.</text>
</comment>
<comment type="subunit">
    <text evidence="2 7">Directly interacts with TJP1/ZO-1, TJP2/ZO-2 and TJP3/ZO-3 (By similarity). Interacts with CLDN1, CD81 and OCLN (PubMed:20375010).</text>
</comment>
<comment type="interaction">
    <interactant intactId="EBI-12955011">
        <id>P56747</id>
    </interactant>
    <interactant intactId="EBI-720480">
        <id>P24593</id>
        <label>IGFBP5</label>
    </interactant>
    <organismsDiffer>false</organismsDiffer>
    <experiments>3</experiments>
</comment>
<comment type="interaction">
    <interactant intactId="EBI-12955011">
        <id>P56747</id>
    </interactant>
    <interactant intactId="EBI-286483">
        <id>P45983</id>
        <label>MAPK8</label>
    </interactant>
    <organismsDiffer>false</organismsDiffer>
    <experiments>3</experiments>
</comment>
<comment type="interaction">
    <interactant intactId="EBI-12955011">
        <id>P56747</id>
    </interactant>
    <interactant intactId="EBI-12806656">
        <id>Q96HJ5</id>
        <label>MS4A3</label>
    </interactant>
    <organismsDiffer>false</organismsDiffer>
    <experiments>5</experiments>
</comment>
<comment type="interaction">
    <interactant intactId="EBI-12955011">
        <id>P56747</id>
    </interactant>
    <interactant intactId="EBI-17263240">
        <id>P15941-11</id>
        <label>MUC1</label>
    </interactant>
    <organismsDiffer>false</organismsDiffer>
    <experiments>3</experiments>
</comment>
<comment type="interaction">
    <interactant intactId="EBI-12955011">
        <id>P56747</id>
    </interactant>
    <interactant intactId="EBI-2845982">
        <id>Q01453</id>
        <label>PMP22</label>
    </interactant>
    <organismsDiffer>false</organismsDiffer>
    <experiments>3</experiments>
</comment>
<comment type="interaction">
    <interactant intactId="EBI-12955011">
        <id>P56747</id>
    </interactant>
    <interactant intactId="EBI-10262251">
        <id>Q8IWU4</id>
        <label>SLC30A8</label>
    </interactant>
    <organismsDiffer>false</organismsDiffer>
    <experiments>3</experiments>
</comment>
<comment type="interaction">
    <interactant intactId="EBI-12955011">
        <id>P56747</id>
    </interactant>
    <interactant intactId="EBI-11724423">
        <id>Q7Z7N9</id>
        <label>TMEM179B</label>
    </interactant>
    <organismsDiffer>false</organismsDiffer>
    <experiments>3</experiments>
</comment>
<comment type="subcellular location">
    <subcellularLocation>
        <location evidence="2">Cell junction</location>
        <location evidence="2">Tight junction</location>
    </subcellularLocation>
    <subcellularLocation>
        <location evidence="7">Cell membrane</location>
        <topology evidence="3">Multi-pass membrane protein</topology>
    </subcellularLocation>
</comment>
<comment type="tissue specificity">
    <text evidence="6">Expressed in the liver, in peripheral blood mononuclear cells and hepatocarcinoma cell lines.</text>
</comment>
<comment type="similarity">
    <text evidence="10">Belongs to the claudin family.</text>
</comment>
<comment type="online information" name="Atlas of Genetics and Cytogenetics in Oncology and Haematology">
    <link uri="https://atlasgeneticsoncology.org/gene/50974/CLDN6"/>
</comment>
<evidence type="ECO:0000250" key="1"/>
<evidence type="ECO:0000250" key="2">
    <source>
        <dbReference type="UniProtKB" id="Q9Z262"/>
    </source>
</evidence>
<evidence type="ECO:0000255" key="3"/>
<evidence type="ECO:0000269" key="4">
    <source>
    </source>
</evidence>
<evidence type="ECO:0000269" key="5">
    <source>
    </source>
</evidence>
<evidence type="ECO:0000269" key="6">
    <source>
    </source>
</evidence>
<evidence type="ECO:0000269" key="7">
    <source>
    </source>
</evidence>
<evidence type="ECO:0000269" key="8">
    <source ref="1"/>
</evidence>
<evidence type="ECO:0000269" key="9">
    <source ref="2"/>
</evidence>
<evidence type="ECO:0000305" key="10"/>
<evidence type="ECO:0007744" key="11">
    <source>
    </source>
</evidence>
<feature type="chain" id="PRO_0000144748" description="Claudin-6">
    <location>
        <begin position="1"/>
        <end position="220"/>
    </location>
</feature>
<feature type="topological domain" description="Cytoplasmic" evidence="3">
    <location>
        <begin position="1"/>
        <end position="7"/>
    </location>
</feature>
<feature type="transmembrane region" description="Helical" evidence="3">
    <location>
        <begin position="8"/>
        <end position="28"/>
    </location>
</feature>
<feature type="topological domain" description="Extracellular" evidence="3">
    <location>
        <begin position="29"/>
        <end position="81"/>
    </location>
</feature>
<feature type="transmembrane region" description="Helical" evidence="3">
    <location>
        <begin position="82"/>
        <end position="102"/>
    </location>
</feature>
<feature type="topological domain" description="Cytoplasmic" evidence="3">
    <location>
        <begin position="103"/>
        <end position="116"/>
    </location>
</feature>
<feature type="transmembrane region" description="Helical" evidence="3">
    <location>
        <begin position="117"/>
        <end position="137"/>
    </location>
</feature>
<feature type="topological domain" description="Extracellular" evidence="3">
    <location>
        <begin position="138"/>
        <end position="160"/>
    </location>
</feature>
<feature type="transmembrane region" description="Helical" evidence="3">
    <location>
        <begin position="161"/>
        <end position="181"/>
    </location>
</feature>
<feature type="topological domain" description="Cytoplasmic" evidence="3">
    <location>
        <begin position="182"/>
        <end position="220"/>
    </location>
</feature>
<feature type="region of interest" description="Interactions with TJP1, TJP2 and TJP3" evidence="1">
    <location>
        <begin position="219"/>
        <end position="220"/>
    </location>
</feature>
<feature type="modified residue" description="Phosphoserine" evidence="11">
    <location>
        <position position="201"/>
    </location>
</feature>
<feature type="modified residue" description="Phosphoserine" evidence="11">
    <location>
        <position position="203"/>
    </location>
</feature>
<feature type="modified residue" description="Phosphoserine" evidence="11">
    <location>
        <position position="208"/>
    </location>
</feature>
<feature type="modified residue" description="Phosphoserine" evidence="11">
    <location>
        <position position="212"/>
    </location>
</feature>
<feature type="sequence variant" id="VAR_017151" description="In dbSNP:rs2257295." evidence="4 5 8 9">
    <original>I</original>
    <variation>V</variation>
    <location>
        <position position="143"/>
    </location>
</feature>